<sequence length="447" mass="48529">MVSERQTWSLLQGGQCNEYTVAYINARIIDPASGTDYKGYLLTRGKEILDFGPGFFDPNGAAFAASEVVDCNGHVLMPGIVDLHVHLREPGGEHKETVDTGSRAAAAGGVTTVVCQPNTIPRLENVLVAKYLKMRALESSCVNIEFYGAVTKSDGELCDMASLKDAGALGFTDDGLPVMNALYMKRAFEYAQDLDVVVAQHAEDCNLSDGGCINEGLVSRELGLKGIPDISESIMVSRDIQLLREVPGAHYHVLHISTKKALDIVRAAKREGLRVTCEVTPHHFLLNESAVLEHGTMAKMNPPLRTEEDRLSMISGLEDGTIDCIATDHAPHAAQEKTRPISCCAFGIVGLETLLPLSLELYHNAGMSLMDVLSKLTSKPAEIVRLPRGKIAKGLVADLVIFDLEHVWTIDTAKFSSKSKNSPFQGRKVKGKVLRTVVSGKTVYRAE</sequence>
<evidence type="ECO:0000255" key="1">
    <source>
        <dbReference type="HAMAP-Rule" id="MF_00220"/>
    </source>
</evidence>
<accession>Q2GL89</accession>
<gene>
    <name evidence="1" type="primary">pyrC</name>
    <name type="ordered locus">APH_0245</name>
</gene>
<dbReference type="EC" id="3.5.2.3" evidence="1"/>
<dbReference type="EMBL" id="CP000235">
    <property type="protein sequence ID" value="ABD43938.1"/>
    <property type="molecule type" value="Genomic_DNA"/>
</dbReference>
<dbReference type="SMR" id="Q2GL89"/>
<dbReference type="STRING" id="212042.APH_0245"/>
<dbReference type="PaxDb" id="212042-APH_0245"/>
<dbReference type="EnsemblBacteria" id="ABD43938">
    <property type="protein sequence ID" value="ABD43938"/>
    <property type="gene ID" value="APH_0245"/>
</dbReference>
<dbReference type="KEGG" id="aph:APH_0245"/>
<dbReference type="eggNOG" id="COG0044">
    <property type="taxonomic scope" value="Bacteria"/>
</dbReference>
<dbReference type="HOGENOM" id="CLU_015572_1_0_5"/>
<dbReference type="UniPathway" id="UPA00070">
    <property type="reaction ID" value="UER00117"/>
</dbReference>
<dbReference type="Proteomes" id="UP000001943">
    <property type="component" value="Chromosome"/>
</dbReference>
<dbReference type="GO" id="GO:0005737">
    <property type="term" value="C:cytoplasm"/>
    <property type="evidence" value="ECO:0007669"/>
    <property type="project" value="TreeGrafter"/>
</dbReference>
<dbReference type="GO" id="GO:0004038">
    <property type="term" value="F:allantoinase activity"/>
    <property type="evidence" value="ECO:0007669"/>
    <property type="project" value="TreeGrafter"/>
</dbReference>
<dbReference type="GO" id="GO:0004151">
    <property type="term" value="F:dihydroorotase activity"/>
    <property type="evidence" value="ECO:0007669"/>
    <property type="project" value="UniProtKB-UniRule"/>
</dbReference>
<dbReference type="GO" id="GO:0008270">
    <property type="term" value="F:zinc ion binding"/>
    <property type="evidence" value="ECO:0007669"/>
    <property type="project" value="UniProtKB-UniRule"/>
</dbReference>
<dbReference type="GO" id="GO:0044205">
    <property type="term" value="P:'de novo' UMP biosynthetic process"/>
    <property type="evidence" value="ECO:0007669"/>
    <property type="project" value="UniProtKB-UniRule"/>
</dbReference>
<dbReference type="GO" id="GO:0006145">
    <property type="term" value="P:purine nucleobase catabolic process"/>
    <property type="evidence" value="ECO:0007669"/>
    <property type="project" value="TreeGrafter"/>
</dbReference>
<dbReference type="CDD" id="cd01317">
    <property type="entry name" value="DHOase_IIa"/>
    <property type="match status" value="1"/>
</dbReference>
<dbReference type="Gene3D" id="3.20.20.140">
    <property type="entry name" value="Metal-dependent hydrolases"/>
    <property type="match status" value="1"/>
</dbReference>
<dbReference type="Gene3D" id="2.30.40.10">
    <property type="entry name" value="Urease, subunit C, domain 1"/>
    <property type="match status" value="1"/>
</dbReference>
<dbReference type="HAMAP" id="MF_00220_B">
    <property type="entry name" value="PyrC_classI_B"/>
    <property type="match status" value="1"/>
</dbReference>
<dbReference type="InterPro" id="IPR006680">
    <property type="entry name" value="Amidohydro-rel"/>
</dbReference>
<dbReference type="InterPro" id="IPR004722">
    <property type="entry name" value="DHOase"/>
</dbReference>
<dbReference type="InterPro" id="IPR050138">
    <property type="entry name" value="DHOase/Allantoinase_Hydrolase"/>
</dbReference>
<dbReference type="InterPro" id="IPR002195">
    <property type="entry name" value="Dihydroorotase_CS"/>
</dbReference>
<dbReference type="InterPro" id="IPR011059">
    <property type="entry name" value="Metal-dep_hydrolase_composite"/>
</dbReference>
<dbReference type="InterPro" id="IPR032466">
    <property type="entry name" value="Metal_Hydrolase"/>
</dbReference>
<dbReference type="NCBIfam" id="TIGR00857">
    <property type="entry name" value="pyrC_multi"/>
    <property type="match status" value="1"/>
</dbReference>
<dbReference type="PANTHER" id="PTHR43668">
    <property type="entry name" value="ALLANTOINASE"/>
    <property type="match status" value="1"/>
</dbReference>
<dbReference type="PANTHER" id="PTHR43668:SF2">
    <property type="entry name" value="ALLANTOINASE"/>
    <property type="match status" value="1"/>
</dbReference>
<dbReference type="Pfam" id="PF01979">
    <property type="entry name" value="Amidohydro_1"/>
    <property type="match status" value="1"/>
</dbReference>
<dbReference type="SUPFAM" id="SSF51338">
    <property type="entry name" value="Composite domain of metallo-dependent hydrolases"/>
    <property type="match status" value="1"/>
</dbReference>
<dbReference type="SUPFAM" id="SSF51556">
    <property type="entry name" value="Metallo-dependent hydrolases"/>
    <property type="match status" value="1"/>
</dbReference>
<dbReference type="PROSITE" id="PS00482">
    <property type="entry name" value="DIHYDROOROTASE_1"/>
    <property type="match status" value="1"/>
</dbReference>
<dbReference type="PROSITE" id="PS00483">
    <property type="entry name" value="DIHYDROOROTASE_2"/>
    <property type="match status" value="1"/>
</dbReference>
<reference key="1">
    <citation type="journal article" date="2006" name="PLoS Genet.">
        <title>Comparative genomics of emerging human ehrlichiosis agents.</title>
        <authorList>
            <person name="Dunning Hotopp J.C."/>
            <person name="Lin M."/>
            <person name="Madupu R."/>
            <person name="Crabtree J."/>
            <person name="Angiuoli S.V."/>
            <person name="Eisen J.A."/>
            <person name="Seshadri R."/>
            <person name="Ren Q."/>
            <person name="Wu M."/>
            <person name="Utterback T.R."/>
            <person name="Smith S."/>
            <person name="Lewis M."/>
            <person name="Khouri H."/>
            <person name="Zhang C."/>
            <person name="Niu H."/>
            <person name="Lin Q."/>
            <person name="Ohashi N."/>
            <person name="Zhi N."/>
            <person name="Nelson W.C."/>
            <person name="Brinkac L.M."/>
            <person name="Dodson R.J."/>
            <person name="Rosovitz M.J."/>
            <person name="Sundaram J.P."/>
            <person name="Daugherty S.C."/>
            <person name="Davidsen T."/>
            <person name="Durkin A.S."/>
            <person name="Gwinn M.L."/>
            <person name="Haft D.H."/>
            <person name="Selengut J.D."/>
            <person name="Sullivan S.A."/>
            <person name="Zafar N."/>
            <person name="Zhou L."/>
            <person name="Benahmed F."/>
            <person name="Forberger H."/>
            <person name="Halpin R."/>
            <person name="Mulligan S."/>
            <person name="Robinson J."/>
            <person name="White O."/>
            <person name="Rikihisa Y."/>
            <person name="Tettelin H."/>
        </authorList>
    </citation>
    <scope>NUCLEOTIDE SEQUENCE [LARGE SCALE GENOMIC DNA]</scope>
    <source>
        <strain>HZ</strain>
    </source>
</reference>
<name>PYRC_ANAPZ</name>
<organism>
    <name type="scientific">Anaplasma phagocytophilum (strain HZ)</name>
    <dbReference type="NCBI Taxonomy" id="212042"/>
    <lineage>
        <taxon>Bacteria</taxon>
        <taxon>Pseudomonadati</taxon>
        <taxon>Pseudomonadota</taxon>
        <taxon>Alphaproteobacteria</taxon>
        <taxon>Rickettsiales</taxon>
        <taxon>Anaplasmataceae</taxon>
        <taxon>Anaplasma</taxon>
        <taxon>phagocytophilum group</taxon>
    </lineage>
</organism>
<proteinExistence type="inferred from homology"/>
<feature type="chain" id="PRO_0000325581" description="Dihydroorotase">
    <location>
        <begin position="1"/>
        <end position="447"/>
    </location>
</feature>
<feature type="active site" evidence="1">
    <location>
        <position position="328"/>
    </location>
</feature>
<feature type="binding site" evidence="1">
    <location>
        <position position="84"/>
    </location>
    <ligand>
        <name>Zn(2+)</name>
        <dbReference type="ChEBI" id="CHEBI:29105"/>
        <label>1</label>
    </ligand>
</feature>
<feature type="binding site" evidence="1">
    <location>
        <begin position="86"/>
        <end position="88"/>
    </location>
    <ligand>
        <name>substrate</name>
    </ligand>
</feature>
<feature type="binding site" evidence="1">
    <location>
        <position position="86"/>
    </location>
    <ligand>
        <name>Zn(2+)</name>
        <dbReference type="ChEBI" id="CHEBI:29105"/>
        <label>1</label>
    </ligand>
</feature>
<feature type="binding site" evidence="1">
    <location>
        <position position="118"/>
    </location>
    <ligand>
        <name>substrate</name>
    </ligand>
</feature>
<feature type="binding site" evidence="1">
    <location>
        <position position="174"/>
    </location>
    <ligand>
        <name>Zn(2+)</name>
        <dbReference type="ChEBI" id="CHEBI:29105"/>
        <label>1</label>
    </ligand>
</feature>
<feature type="binding site" evidence="1">
    <location>
        <position position="174"/>
    </location>
    <ligand>
        <name>Zn(2+)</name>
        <dbReference type="ChEBI" id="CHEBI:29105"/>
        <label>2</label>
    </ligand>
</feature>
<feature type="binding site" evidence="1">
    <location>
        <position position="201"/>
    </location>
    <ligand>
        <name>Zn(2+)</name>
        <dbReference type="ChEBI" id="CHEBI:29105"/>
        <label>2</label>
    </ligand>
</feature>
<feature type="binding site" evidence="1">
    <location>
        <position position="255"/>
    </location>
    <ligand>
        <name>Zn(2+)</name>
        <dbReference type="ChEBI" id="CHEBI:29105"/>
        <label>2</label>
    </ligand>
</feature>
<feature type="binding site" evidence="1">
    <location>
        <position position="301"/>
    </location>
    <ligand>
        <name>substrate</name>
    </ligand>
</feature>
<feature type="binding site" evidence="1">
    <location>
        <position position="328"/>
    </location>
    <ligand>
        <name>Zn(2+)</name>
        <dbReference type="ChEBI" id="CHEBI:29105"/>
        <label>1</label>
    </ligand>
</feature>
<feature type="binding site" evidence="1">
    <location>
        <position position="332"/>
    </location>
    <ligand>
        <name>substrate</name>
    </ligand>
</feature>
<feature type="binding site" evidence="1">
    <location>
        <begin position="346"/>
        <end position="347"/>
    </location>
    <ligand>
        <name>substrate</name>
    </ligand>
</feature>
<protein>
    <recommendedName>
        <fullName evidence="1">Dihydroorotase</fullName>
        <shortName evidence="1">DHOase</shortName>
        <ecNumber evidence="1">3.5.2.3</ecNumber>
    </recommendedName>
</protein>
<keyword id="KW-0378">Hydrolase</keyword>
<keyword id="KW-0479">Metal-binding</keyword>
<keyword id="KW-0665">Pyrimidine biosynthesis</keyword>
<keyword id="KW-0862">Zinc</keyword>
<comment type="function">
    <text evidence="1">Catalyzes the reversible cyclization of carbamoyl aspartate to dihydroorotate.</text>
</comment>
<comment type="catalytic activity">
    <reaction evidence="1">
        <text>(S)-dihydroorotate + H2O = N-carbamoyl-L-aspartate + H(+)</text>
        <dbReference type="Rhea" id="RHEA:24296"/>
        <dbReference type="ChEBI" id="CHEBI:15377"/>
        <dbReference type="ChEBI" id="CHEBI:15378"/>
        <dbReference type="ChEBI" id="CHEBI:30864"/>
        <dbReference type="ChEBI" id="CHEBI:32814"/>
        <dbReference type="EC" id="3.5.2.3"/>
    </reaction>
</comment>
<comment type="cofactor">
    <cofactor evidence="1">
        <name>Zn(2+)</name>
        <dbReference type="ChEBI" id="CHEBI:29105"/>
    </cofactor>
    <text evidence="1">Binds 2 Zn(2+) ions per subunit.</text>
</comment>
<comment type="pathway">
    <text evidence="1">Pyrimidine metabolism; UMP biosynthesis via de novo pathway; (S)-dihydroorotate from bicarbonate: step 3/3.</text>
</comment>
<comment type="similarity">
    <text evidence="1">Belongs to the metallo-dependent hydrolases superfamily. DHOase family. Class I DHOase subfamily.</text>
</comment>